<organism>
    <name type="scientific">Pectobacterium atrosepticum (strain SCRI 1043 / ATCC BAA-672)</name>
    <name type="common">Erwinia carotovora subsp. atroseptica</name>
    <dbReference type="NCBI Taxonomy" id="218491"/>
    <lineage>
        <taxon>Bacteria</taxon>
        <taxon>Pseudomonadati</taxon>
        <taxon>Pseudomonadota</taxon>
        <taxon>Gammaproteobacteria</taxon>
        <taxon>Enterobacterales</taxon>
        <taxon>Pectobacteriaceae</taxon>
        <taxon>Pectobacterium</taxon>
    </lineage>
</organism>
<evidence type="ECO:0000255" key="1">
    <source>
        <dbReference type="HAMAP-Rule" id="MF_00095"/>
    </source>
</evidence>
<protein>
    <recommendedName>
        <fullName evidence="1">Sugar fermentation stimulation protein homolog</fullName>
    </recommendedName>
</protein>
<name>SFSA_PECAS</name>
<gene>
    <name evidence="1" type="primary">sfsA</name>
    <name type="ordered locus">ECA3316</name>
</gene>
<feature type="chain" id="PRO_0000152286" description="Sugar fermentation stimulation protein homolog">
    <location>
        <begin position="1"/>
        <end position="234"/>
    </location>
</feature>
<accession>Q6D1Y1</accession>
<proteinExistence type="inferred from homology"/>
<keyword id="KW-1185">Reference proteome</keyword>
<dbReference type="EMBL" id="BX950851">
    <property type="protein sequence ID" value="CAG76214.1"/>
    <property type="molecule type" value="Genomic_DNA"/>
</dbReference>
<dbReference type="RefSeq" id="WP_011094832.1">
    <property type="nucleotide sequence ID" value="NC_004547.2"/>
</dbReference>
<dbReference type="SMR" id="Q6D1Y1"/>
<dbReference type="STRING" id="218491.ECA3316"/>
<dbReference type="DNASU" id="2884401"/>
<dbReference type="GeneID" id="57210006"/>
<dbReference type="KEGG" id="eca:ECA3316"/>
<dbReference type="PATRIC" id="fig|218491.5.peg.3367"/>
<dbReference type="eggNOG" id="COG1489">
    <property type="taxonomic scope" value="Bacteria"/>
</dbReference>
<dbReference type="HOGENOM" id="CLU_052299_2_0_6"/>
<dbReference type="OrthoDB" id="9802365at2"/>
<dbReference type="Proteomes" id="UP000007966">
    <property type="component" value="Chromosome"/>
</dbReference>
<dbReference type="GO" id="GO:0003677">
    <property type="term" value="F:DNA binding"/>
    <property type="evidence" value="ECO:0007669"/>
    <property type="project" value="InterPro"/>
</dbReference>
<dbReference type="CDD" id="cd22359">
    <property type="entry name" value="SfsA-like_bacterial"/>
    <property type="match status" value="1"/>
</dbReference>
<dbReference type="FunFam" id="2.40.50.580:FF:000001">
    <property type="entry name" value="Sugar fermentation stimulation protein A"/>
    <property type="match status" value="1"/>
</dbReference>
<dbReference type="FunFam" id="3.40.1350.60:FF:000001">
    <property type="entry name" value="Sugar fermentation stimulation protein A"/>
    <property type="match status" value="1"/>
</dbReference>
<dbReference type="Gene3D" id="2.40.50.580">
    <property type="match status" value="1"/>
</dbReference>
<dbReference type="Gene3D" id="3.40.1350.60">
    <property type="match status" value="1"/>
</dbReference>
<dbReference type="HAMAP" id="MF_00095">
    <property type="entry name" value="SfsA"/>
    <property type="match status" value="1"/>
</dbReference>
<dbReference type="InterPro" id="IPR005224">
    <property type="entry name" value="SfsA"/>
</dbReference>
<dbReference type="InterPro" id="IPR040452">
    <property type="entry name" value="SfsA_C"/>
</dbReference>
<dbReference type="InterPro" id="IPR041465">
    <property type="entry name" value="SfsA_N"/>
</dbReference>
<dbReference type="NCBIfam" id="TIGR00230">
    <property type="entry name" value="sfsA"/>
    <property type="match status" value="1"/>
</dbReference>
<dbReference type="PANTHER" id="PTHR30545">
    <property type="entry name" value="SUGAR FERMENTATION STIMULATION PROTEIN A"/>
    <property type="match status" value="1"/>
</dbReference>
<dbReference type="PANTHER" id="PTHR30545:SF2">
    <property type="entry name" value="SUGAR FERMENTATION STIMULATION PROTEIN A"/>
    <property type="match status" value="1"/>
</dbReference>
<dbReference type="Pfam" id="PF03749">
    <property type="entry name" value="SfsA"/>
    <property type="match status" value="1"/>
</dbReference>
<dbReference type="Pfam" id="PF17746">
    <property type="entry name" value="SfsA_N"/>
    <property type="match status" value="1"/>
</dbReference>
<comment type="similarity">
    <text evidence="1">Belongs to the SfsA family.</text>
</comment>
<reference key="1">
    <citation type="journal article" date="2004" name="Proc. Natl. Acad. Sci. U.S.A.">
        <title>Genome sequence of the enterobacterial phytopathogen Erwinia carotovora subsp. atroseptica and characterization of virulence factors.</title>
        <authorList>
            <person name="Bell K.S."/>
            <person name="Sebaihia M."/>
            <person name="Pritchard L."/>
            <person name="Holden M.T.G."/>
            <person name="Hyman L.J."/>
            <person name="Holeva M.C."/>
            <person name="Thomson N.R."/>
            <person name="Bentley S.D."/>
            <person name="Churcher L.J.C."/>
            <person name="Mungall K."/>
            <person name="Atkin R."/>
            <person name="Bason N."/>
            <person name="Brooks K."/>
            <person name="Chillingworth T."/>
            <person name="Clark K."/>
            <person name="Doggett J."/>
            <person name="Fraser A."/>
            <person name="Hance Z."/>
            <person name="Hauser H."/>
            <person name="Jagels K."/>
            <person name="Moule S."/>
            <person name="Norbertczak H."/>
            <person name="Ormond D."/>
            <person name="Price C."/>
            <person name="Quail M.A."/>
            <person name="Sanders M."/>
            <person name="Walker D."/>
            <person name="Whitehead S."/>
            <person name="Salmond G.P.C."/>
            <person name="Birch P.R.J."/>
            <person name="Parkhill J."/>
            <person name="Toth I.K."/>
        </authorList>
    </citation>
    <scope>NUCLEOTIDE SEQUENCE [LARGE SCALE GENOMIC DNA]</scope>
    <source>
        <strain>SCRI 1043 / ATCC BAA-672</strain>
    </source>
</reference>
<sequence length="234" mass="26478">MDYTPRLQPARLIKRYKRFLADVVTPEGETLTLHCANTGAMTGCATPGDTVWYSTSDNPKRKYPQSWELTETQQNHWICVNTLRANTLLYEALLENRIEELAGYSDIKTEVKYGTENSRIDLLLQAPDRIDCYIEVKSVTLLQHECGYFPDAVTLRGQKHLRELQQMVSNGKRAVLFFAVLHSGIQQVSPARHIDSRYAELFIEAQQAGVEILCYGSTLCPDGIKLTNKLPLLG</sequence>